<organism>
    <name type="scientific">Escherichia coli O6:H1 (strain CFT073 / ATCC 700928 / UPEC)</name>
    <dbReference type="NCBI Taxonomy" id="199310"/>
    <lineage>
        <taxon>Bacteria</taxon>
        <taxon>Pseudomonadati</taxon>
        <taxon>Pseudomonadota</taxon>
        <taxon>Gammaproteobacteria</taxon>
        <taxon>Enterobacterales</taxon>
        <taxon>Enterobacteriaceae</taxon>
        <taxon>Escherichia</taxon>
    </lineage>
</organism>
<evidence type="ECO:0000250" key="1"/>
<evidence type="ECO:0000305" key="2"/>
<gene>
    <name type="primary">citG</name>
    <name type="ordered locus">c0701</name>
</gene>
<sequence length="292" mass="31581">MSMPATSTKTTKLATSLIDEYALLGWRAMLTEVNLSPKPGLVDRINCGAHKDMALEDFHRSALAIQGWLPRFIEFGACSAEMAPEAVLNGLRPIGMACEGDMFRATAGVNTHKGSIFSLGLLCAAIGRLLQLNQSVTPITICATAASFCRGLTDRELRTNNSQLTAGQRLYQQLGLTGARGEAEAGYPLVINHALPHYLTLLDQGLDPELALLDTLLLLMATNGDTNVASRGGEGGLRWLQREAQTLLNNGGIRTPADLDYLRQFDRECIERNISPGGSADLLILTWFLAQI</sequence>
<comment type="function">
    <text evidence="1">Catalyzes the formation of 2-(5''-triphosphoribosyl)-3'-dephosphocoenzyme-A, the precursor of the prosthetic group of the holo-acyl carrier protein (gamma chain) of citrate lyase, from ATP and dephospho-CoA.</text>
</comment>
<comment type="catalytic activity">
    <reaction>
        <text>3'-dephospho-CoA + ATP = 2'-(5''-triphospho-alpha-D-ribosyl)-3'-dephospho-CoA + adenine</text>
        <dbReference type="Rhea" id="RHEA:15117"/>
        <dbReference type="ChEBI" id="CHEBI:16708"/>
        <dbReference type="ChEBI" id="CHEBI:30616"/>
        <dbReference type="ChEBI" id="CHEBI:57328"/>
        <dbReference type="ChEBI" id="CHEBI:61378"/>
        <dbReference type="EC" id="2.4.2.52"/>
    </reaction>
</comment>
<comment type="similarity">
    <text evidence="2">Belongs to the CitG/MdcB family.</text>
</comment>
<name>CITG_ECOL6</name>
<proteinExistence type="inferred from homology"/>
<reference key="1">
    <citation type="journal article" date="2002" name="Proc. Natl. Acad. Sci. U.S.A.">
        <title>Extensive mosaic structure revealed by the complete genome sequence of uropathogenic Escherichia coli.</title>
        <authorList>
            <person name="Welch R.A."/>
            <person name="Burland V."/>
            <person name="Plunkett G. III"/>
            <person name="Redford P."/>
            <person name="Roesch P."/>
            <person name="Rasko D."/>
            <person name="Buckles E.L."/>
            <person name="Liou S.-R."/>
            <person name="Boutin A."/>
            <person name="Hackett J."/>
            <person name="Stroud D."/>
            <person name="Mayhew G.F."/>
            <person name="Rose D.J."/>
            <person name="Zhou S."/>
            <person name="Schwartz D.C."/>
            <person name="Perna N.T."/>
            <person name="Mobley H.L.T."/>
            <person name="Donnenberg M.S."/>
            <person name="Blattner F.R."/>
        </authorList>
    </citation>
    <scope>NUCLEOTIDE SEQUENCE [LARGE SCALE GENOMIC DNA]</scope>
    <source>
        <strain>CFT073 / ATCC 700928 / UPEC</strain>
    </source>
</reference>
<feature type="chain" id="PRO_0000214665" description="2-(5''-triphosphoribosyl)-3'-dephosphocoenzyme-A synthase">
    <location>
        <begin position="1"/>
        <end position="292"/>
    </location>
</feature>
<keyword id="KW-0067">ATP-binding</keyword>
<keyword id="KW-0547">Nucleotide-binding</keyword>
<keyword id="KW-1185">Reference proteome</keyword>
<keyword id="KW-0808">Transferase</keyword>
<accession>Q8FK04</accession>
<protein>
    <recommendedName>
        <fullName>2-(5''-triphosphoribosyl)-3'-dephosphocoenzyme-A synthase</fullName>
        <shortName>2-(5''-triphosphoribosyl)-3'-dephospho-CoA synthase</shortName>
        <ecNumber>2.4.2.52</ecNumber>
    </recommendedName>
</protein>
<dbReference type="EC" id="2.4.2.52"/>
<dbReference type="EMBL" id="AE014075">
    <property type="protein sequence ID" value="AAN79176.1"/>
    <property type="molecule type" value="Genomic_DNA"/>
</dbReference>
<dbReference type="RefSeq" id="WP_000062478.1">
    <property type="nucleotide sequence ID" value="NZ_CP051263.1"/>
</dbReference>
<dbReference type="STRING" id="199310.c0701"/>
<dbReference type="KEGG" id="ecc:c0701"/>
<dbReference type="eggNOG" id="COG1767">
    <property type="taxonomic scope" value="Bacteria"/>
</dbReference>
<dbReference type="HOGENOM" id="CLU_056179_1_0_6"/>
<dbReference type="BioCyc" id="ECOL199310:C0701-MONOMER"/>
<dbReference type="Proteomes" id="UP000001410">
    <property type="component" value="Chromosome"/>
</dbReference>
<dbReference type="GO" id="GO:0005524">
    <property type="term" value="F:ATP binding"/>
    <property type="evidence" value="ECO:0007669"/>
    <property type="project" value="UniProtKB-KW"/>
</dbReference>
<dbReference type="GO" id="GO:0046917">
    <property type="term" value="F:triphosphoribosyl-dephospho-CoA synthase activity"/>
    <property type="evidence" value="ECO:0007669"/>
    <property type="project" value="UniProtKB-UniRule"/>
</dbReference>
<dbReference type="GO" id="GO:0051191">
    <property type="term" value="P:prosthetic group biosynthetic process"/>
    <property type="evidence" value="ECO:0007669"/>
    <property type="project" value="TreeGrafter"/>
</dbReference>
<dbReference type="FunFam" id="1.10.4200.10:FF:000001">
    <property type="entry name" value="Triphosphoribosyl-dephospho-CoA synthase CitG"/>
    <property type="match status" value="1"/>
</dbReference>
<dbReference type="Gene3D" id="1.10.4200.10">
    <property type="entry name" value="Triphosphoribosyl-dephospho-CoA protein"/>
    <property type="match status" value="1"/>
</dbReference>
<dbReference type="HAMAP" id="MF_00397">
    <property type="entry name" value="CitG"/>
    <property type="match status" value="1"/>
</dbReference>
<dbReference type="InterPro" id="IPR002736">
    <property type="entry name" value="CitG"/>
</dbReference>
<dbReference type="InterPro" id="IPR017551">
    <property type="entry name" value="TriPribosyl-deP-CoA_syn_CitG"/>
</dbReference>
<dbReference type="NCBIfam" id="TIGR03125">
    <property type="entry name" value="citrate_citG"/>
    <property type="match status" value="1"/>
</dbReference>
<dbReference type="NCBIfam" id="NF007503">
    <property type="entry name" value="PRK10096.1"/>
    <property type="match status" value="1"/>
</dbReference>
<dbReference type="PANTHER" id="PTHR30201:SF2">
    <property type="entry name" value="2-(5''-TRIPHOSPHORIBOSYL)-3'-DEPHOSPHOCOENZYME-A SYNTHASE"/>
    <property type="match status" value="1"/>
</dbReference>
<dbReference type="PANTHER" id="PTHR30201">
    <property type="entry name" value="TRIPHOSPHORIBOSYL-DEPHOSPHO-COA SYNTHASE"/>
    <property type="match status" value="1"/>
</dbReference>
<dbReference type="Pfam" id="PF01874">
    <property type="entry name" value="CitG"/>
    <property type="match status" value="1"/>
</dbReference>